<gene>
    <name evidence="1" type="primary">dsbB</name>
    <name type="ordered locus">SBO_1887</name>
</gene>
<comment type="function">
    <text evidence="1">Required for disulfide bond formation in some periplasmic proteins. Acts by oxidizing the DsbA protein.</text>
</comment>
<comment type="subcellular location">
    <subcellularLocation>
        <location evidence="1">Cell inner membrane</location>
        <topology evidence="1">Multi-pass membrane protein</topology>
    </subcellularLocation>
</comment>
<comment type="similarity">
    <text evidence="1">Belongs to the DsbB family.</text>
</comment>
<organism>
    <name type="scientific">Shigella boydii serotype 4 (strain Sb227)</name>
    <dbReference type="NCBI Taxonomy" id="300268"/>
    <lineage>
        <taxon>Bacteria</taxon>
        <taxon>Pseudomonadati</taxon>
        <taxon>Pseudomonadota</taxon>
        <taxon>Gammaproteobacteria</taxon>
        <taxon>Enterobacterales</taxon>
        <taxon>Enterobacteriaceae</taxon>
        <taxon>Shigella</taxon>
    </lineage>
</organism>
<keyword id="KW-0997">Cell inner membrane</keyword>
<keyword id="KW-1003">Cell membrane</keyword>
<keyword id="KW-0143">Chaperone</keyword>
<keyword id="KW-1015">Disulfide bond</keyword>
<keyword id="KW-0249">Electron transport</keyword>
<keyword id="KW-0472">Membrane</keyword>
<keyword id="KW-0560">Oxidoreductase</keyword>
<keyword id="KW-0676">Redox-active center</keyword>
<keyword id="KW-0812">Transmembrane</keyword>
<keyword id="KW-1133">Transmembrane helix</keyword>
<keyword id="KW-0813">Transport</keyword>
<evidence type="ECO:0000255" key="1">
    <source>
        <dbReference type="HAMAP-Rule" id="MF_00286"/>
    </source>
</evidence>
<feature type="chain" id="PRO_0000298414" description="Disulfide bond formation protein B">
    <location>
        <begin position="1"/>
        <end position="176"/>
    </location>
</feature>
<feature type="topological domain" description="Cytoplasmic" evidence="1">
    <location>
        <begin position="1"/>
        <end position="14"/>
    </location>
</feature>
<feature type="transmembrane region" description="Helical" evidence="1">
    <location>
        <begin position="15"/>
        <end position="31"/>
    </location>
</feature>
<feature type="topological domain" description="Periplasmic" evidence="1">
    <location>
        <begin position="32"/>
        <end position="49"/>
    </location>
</feature>
<feature type="transmembrane region" description="Helical" evidence="1">
    <location>
        <begin position="50"/>
        <end position="65"/>
    </location>
</feature>
<feature type="topological domain" description="Cytoplasmic" evidence="1">
    <location>
        <begin position="66"/>
        <end position="71"/>
    </location>
</feature>
<feature type="transmembrane region" description="Helical" evidence="1">
    <location>
        <begin position="72"/>
        <end position="89"/>
    </location>
</feature>
<feature type="topological domain" description="Periplasmic" evidence="1">
    <location>
        <begin position="90"/>
        <end position="144"/>
    </location>
</feature>
<feature type="transmembrane region" description="Helical" evidence="1">
    <location>
        <begin position="145"/>
        <end position="163"/>
    </location>
</feature>
<feature type="topological domain" description="Cytoplasmic" evidence="1">
    <location>
        <begin position="164"/>
        <end position="176"/>
    </location>
</feature>
<feature type="disulfide bond" description="Redox-active" evidence="1">
    <location>
        <begin position="41"/>
        <end position="44"/>
    </location>
</feature>
<feature type="disulfide bond" description="Redox-active" evidence="1">
    <location>
        <begin position="104"/>
        <end position="130"/>
    </location>
</feature>
<proteinExistence type="inferred from homology"/>
<reference key="1">
    <citation type="journal article" date="2005" name="Nucleic Acids Res.">
        <title>Genome dynamics and diversity of Shigella species, the etiologic agents of bacillary dysentery.</title>
        <authorList>
            <person name="Yang F."/>
            <person name="Yang J."/>
            <person name="Zhang X."/>
            <person name="Chen L."/>
            <person name="Jiang Y."/>
            <person name="Yan Y."/>
            <person name="Tang X."/>
            <person name="Wang J."/>
            <person name="Xiong Z."/>
            <person name="Dong J."/>
            <person name="Xue Y."/>
            <person name="Zhu Y."/>
            <person name="Xu X."/>
            <person name="Sun L."/>
            <person name="Chen S."/>
            <person name="Nie H."/>
            <person name="Peng J."/>
            <person name="Xu J."/>
            <person name="Wang Y."/>
            <person name="Yuan Z."/>
            <person name="Wen Y."/>
            <person name="Yao Z."/>
            <person name="Shen Y."/>
            <person name="Qiang B."/>
            <person name="Hou Y."/>
            <person name="Yu J."/>
            <person name="Jin Q."/>
        </authorList>
    </citation>
    <scope>NUCLEOTIDE SEQUENCE [LARGE SCALE GENOMIC DNA]</scope>
    <source>
        <strain>Sb227</strain>
    </source>
</reference>
<dbReference type="EMBL" id="CP000036">
    <property type="protein sequence ID" value="ABB66482.1"/>
    <property type="molecule type" value="Genomic_DNA"/>
</dbReference>
<dbReference type="RefSeq" id="WP_000943457.1">
    <property type="nucleotide sequence ID" value="NC_007613.1"/>
</dbReference>
<dbReference type="BMRB" id="Q31ZM6"/>
<dbReference type="SMR" id="Q31ZM6"/>
<dbReference type="GeneID" id="93776247"/>
<dbReference type="KEGG" id="sbo:SBO_1887"/>
<dbReference type="HOGENOM" id="CLU_098660_2_0_6"/>
<dbReference type="Proteomes" id="UP000007067">
    <property type="component" value="Chromosome"/>
</dbReference>
<dbReference type="GO" id="GO:0005886">
    <property type="term" value="C:plasma membrane"/>
    <property type="evidence" value="ECO:0007669"/>
    <property type="project" value="UniProtKB-SubCell"/>
</dbReference>
<dbReference type="GO" id="GO:0009055">
    <property type="term" value="F:electron transfer activity"/>
    <property type="evidence" value="ECO:0007669"/>
    <property type="project" value="UniProtKB-UniRule"/>
</dbReference>
<dbReference type="GO" id="GO:0015035">
    <property type="term" value="F:protein-disulfide reductase activity"/>
    <property type="evidence" value="ECO:0007669"/>
    <property type="project" value="UniProtKB-UniRule"/>
</dbReference>
<dbReference type="GO" id="GO:0006457">
    <property type="term" value="P:protein folding"/>
    <property type="evidence" value="ECO:0007669"/>
    <property type="project" value="InterPro"/>
</dbReference>
<dbReference type="FunFam" id="1.20.1550.10:FF:000001">
    <property type="entry name" value="Disulfide bond formation protein B"/>
    <property type="match status" value="1"/>
</dbReference>
<dbReference type="Gene3D" id="1.20.1550.10">
    <property type="entry name" value="DsbB-like"/>
    <property type="match status" value="1"/>
</dbReference>
<dbReference type="HAMAP" id="MF_00286">
    <property type="entry name" value="DsbB"/>
    <property type="match status" value="1"/>
</dbReference>
<dbReference type="InterPro" id="IPR003752">
    <property type="entry name" value="DiS_bond_form_DsbB/BdbC"/>
</dbReference>
<dbReference type="InterPro" id="IPR022920">
    <property type="entry name" value="Disulphide_bond_form_DsbB"/>
</dbReference>
<dbReference type="InterPro" id="IPR050183">
    <property type="entry name" value="DsbB"/>
</dbReference>
<dbReference type="InterPro" id="IPR023380">
    <property type="entry name" value="DsbB-like_sf"/>
</dbReference>
<dbReference type="NCBIfam" id="NF002485">
    <property type="entry name" value="PRK01749.1"/>
    <property type="match status" value="1"/>
</dbReference>
<dbReference type="PANTHER" id="PTHR36570">
    <property type="entry name" value="DISULFIDE BOND FORMATION PROTEIN B"/>
    <property type="match status" value="1"/>
</dbReference>
<dbReference type="PANTHER" id="PTHR36570:SF2">
    <property type="entry name" value="DISULFIDE BOND FORMATION PROTEIN B"/>
    <property type="match status" value="1"/>
</dbReference>
<dbReference type="Pfam" id="PF02600">
    <property type="entry name" value="DsbB"/>
    <property type="match status" value="1"/>
</dbReference>
<dbReference type="SUPFAM" id="SSF158442">
    <property type="entry name" value="DsbB-like"/>
    <property type="match status" value="1"/>
</dbReference>
<accession>Q31ZM6</accession>
<sequence length="176" mass="20174">MLRFLNQCSQGRGAWLLMAFTALALELTALWFQHVMLLKPCVLCIYERCALFGVLGAALIGAIAPKTPLRYVAMVIWLYSAFRGVQLTYEHTMLQLYPSPFATCDFMVRFPEWLPLDKWVPQVFVASGDCAERQWDFLGLEMPQWLLGIFIAYLIVAVLVMISQPFKAKKRDLFGR</sequence>
<protein>
    <recommendedName>
        <fullName evidence="1">Disulfide bond formation protein B</fullName>
    </recommendedName>
    <alternativeName>
        <fullName evidence="1">Disulfide oxidoreductase</fullName>
    </alternativeName>
</protein>
<name>DSBB_SHIBS</name>